<name>F16P1_PIG</name>
<comment type="function">
    <text evidence="1">Catalyzes the hydrolysis of fructose 1,6-bisphosphate to fructose 6-phosphate in the presence of divalent cations, acting as a rate-limiting enzyme in gluconeogenesis. Plays a role in regulating glucose sensing and insulin secretion of pancreatic beta-cells. Appears to modulate glycerol gluconeogenesis in liver. Important regulator of appetite and adiposity; increased expression of the protein in liver after nutrient excess increases circulating satiety hormones and reduces appetite-stimulating neuropeptides and thus seems to provide a feedback mechanism to limit weight gain.</text>
</comment>
<comment type="catalytic activity">
    <reaction evidence="7 16">
        <text>beta-D-fructose 1,6-bisphosphate + H2O = beta-D-fructose 6-phosphate + phosphate</text>
        <dbReference type="Rhea" id="RHEA:11064"/>
        <dbReference type="ChEBI" id="CHEBI:15377"/>
        <dbReference type="ChEBI" id="CHEBI:32966"/>
        <dbReference type="ChEBI" id="CHEBI:43474"/>
        <dbReference type="ChEBI" id="CHEBI:57634"/>
        <dbReference type="EC" id="3.1.3.11"/>
    </reaction>
</comment>
<comment type="cofactor">
    <cofactor evidence="4 6 7 14">
        <name>Mg(2+)</name>
        <dbReference type="ChEBI" id="CHEBI:18420"/>
    </cofactor>
    <text evidence="4 6 7 14">Binds 3 Mg(2+) ions per subunit.</text>
</comment>
<comment type="activity regulation">
    <text evidence="3 6 7 8 11 14">Subject to complex allosteric regulation. The enzyme can assume an active R-state, or an inactive T-state. Intermediate conformations may exist. AMP acts as an allosteric inhibitor. AMP binding affects the turnover of bound substrate and not the affinity for substrate. Fructose 2,6-bisphosphate acts as a competitive inhibitor. Fructose 2,6-bisphosphate and AMP have synergistic effects.</text>
</comment>
<comment type="biophysicochemical properties">
    <kinetics>
        <KM evidence="7">1.2 uM for fructose-1,6-diphosphate</KM>
    </kinetics>
</comment>
<comment type="pathway">
    <text>Carbohydrate biosynthesis; gluconeogenesis.</text>
</comment>
<comment type="subunit">
    <text evidence="3 5 6 7 8 9 10 11 14">Homotetramer.</text>
</comment>
<comment type="miscellaneous">
    <text>The molecule has a highly reactive cysteine residue (Cys-117 or Cys-129), which tends to form mixed disulfides (e.g. with homocystine) but is not essential for enzyme activity.</text>
</comment>
<comment type="similarity">
    <text evidence="15">Belongs to the FBPase class 1 family.</text>
</comment>
<feature type="initiator methionine" description="Removed" evidence="12 13">
    <location>
        <position position="1"/>
    </location>
</feature>
<feature type="chain" id="PRO_0000200500" description="Fructose-1,6-bisphosphatase 1">
    <location>
        <begin position="2"/>
        <end position="338"/>
    </location>
</feature>
<feature type="binding site" evidence="3 7 11 19 20 25 27 29 30 31 32 33 34 35 36 37 38 51 54 55 57 58 60 65 66 67 68 72 73 75 76 78 79">
    <location>
        <begin position="18"/>
        <end position="22"/>
    </location>
    <ligand>
        <name>AMP</name>
        <dbReference type="ChEBI" id="CHEBI:456215"/>
    </ligand>
</feature>
<feature type="binding site" evidence="3 7 11 19 20 25 27 29 30 31 32 33 34 35 36 37 38 51 54 55 57 58 60 65 66 67 68 72 73 75 76 78 79">
    <location>
        <begin position="28"/>
        <end position="32"/>
    </location>
    <ligand>
        <name>AMP</name>
        <dbReference type="ChEBI" id="CHEBI:456215"/>
    </ligand>
</feature>
<feature type="binding site" evidence="11">
    <location>
        <position position="69"/>
    </location>
    <ligand>
        <name>Mg(2+)</name>
        <dbReference type="ChEBI" id="CHEBI:18420"/>
        <label>1</label>
    </ligand>
</feature>
<feature type="binding site" evidence="11">
    <location>
        <position position="98"/>
    </location>
    <ligand>
        <name>Mg(2+)</name>
        <dbReference type="ChEBI" id="CHEBI:18420"/>
        <label>1</label>
    </ligand>
</feature>
<feature type="binding site" evidence="11">
    <location>
        <position position="98"/>
    </location>
    <ligand>
        <name>Mg(2+)</name>
        <dbReference type="ChEBI" id="CHEBI:18420"/>
        <label>2</label>
    </ligand>
</feature>
<feature type="binding site" evidence="3 7 11 19 20 25 27 29 30 31 32 33 34 35 36 37 38 51 54 55 57 58 60 65 66 67 68 72 73 75 76 78 79">
    <location>
        <begin position="113"/>
        <end position="114"/>
    </location>
    <ligand>
        <name>AMP</name>
        <dbReference type="ChEBI" id="CHEBI:456215"/>
    </ligand>
</feature>
<feature type="binding site" evidence="11">
    <location>
        <position position="119"/>
    </location>
    <ligand>
        <name>Mg(2+)</name>
        <dbReference type="ChEBI" id="CHEBI:18420"/>
        <label>2</label>
    </ligand>
</feature>
<feature type="binding site" evidence="11">
    <location>
        <position position="119"/>
    </location>
    <ligand>
        <name>Mg(2+)</name>
        <dbReference type="ChEBI" id="CHEBI:18420"/>
        <label>3</label>
    </ligand>
</feature>
<feature type="binding site" evidence="11">
    <location>
        <position position="121"/>
    </location>
    <ligand>
        <name>Mg(2+)</name>
        <dbReference type="ChEBI" id="CHEBI:18420"/>
        <label>2</label>
    </ligand>
</feature>
<feature type="binding site" evidence="3 4 5 6 7 8 9 10 11 18 19 20 21 22 23 24 28 29 30 31 32 33 34 35 36 40 41 42 43 44 45 53 62 63 69 80">
    <location>
        <begin position="122"/>
        <end position="125"/>
    </location>
    <ligand>
        <name>substrate</name>
    </ligand>
</feature>
<feature type="binding site" evidence="11">
    <location>
        <position position="122"/>
    </location>
    <ligand>
        <name>Mg(2+)</name>
        <dbReference type="ChEBI" id="CHEBI:18420"/>
        <label>3</label>
    </ligand>
</feature>
<feature type="binding site" evidence="11">
    <location>
        <position position="141"/>
    </location>
    <ligand>
        <name>AMP</name>
        <dbReference type="ChEBI" id="CHEBI:456215"/>
    </ligand>
</feature>
<feature type="binding site" evidence="3 4 5 6 7 8 9 10 11 17 18 19 20 25 26 27 36 37 38 39 40 41 42 43 44 45 46 47 48 49 50 51 52 54 55 56 57 58 59 60 62 63 64 66 67 68 69 70 71 72 73 74 75 76 77 78 79 80">
    <location>
        <begin position="213"/>
        <end position="216"/>
    </location>
    <ligand>
        <name>substrate</name>
    </ligand>
</feature>
<feature type="binding site" evidence="3 4 5 6 7 8 9 10 11 17 18 19 20 25 26 27 37 38 39 40 41 42 43 44 45 46 47 48 49 50 51 52 54 55 56 57 58 59 60 66 67 68 70 71 72 73 74 75 76 77 78 79 80">
    <location>
        <begin position="244"/>
        <end position="249"/>
    </location>
    <ligand>
        <name>substrate</name>
    </ligand>
</feature>
<feature type="binding site" evidence="3 4 5 6 7 8 9 10 11 17 18 19 20 26 27 28 36 37 38 39 40 41 42 43 44 45 46 47 48 49 50 51 52 54 55 56 57 58 59 60 62 63 66 67 68 69 70 71 72 73 74 75 76 77 78 79 80">
    <location>
        <position position="265"/>
    </location>
    <ligand>
        <name>substrate</name>
    </ligand>
</feature>
<feature type="binding site" evidence="3 4 5 6 7 8 9 10 11 17 18 19 20 25 26 27 37 38 39 40 41 42 43 44 45 46 47 48 49 51 52 54 55 56 57 58 59 60 67 68 70 71 73 74 75 76 77 78 79 80">
    <location>
        <begin position="275"/>
        <end position="277"/>
    </location>
    <ligand>
        <name>substrate</name>
    </ligand>
</feature>
<feature type="binding site" evidence="11">
    <location>
        <position position="281"/>
    </location>
    <ligand>
        <name>Mg(2+)</name>
        <dbReference type="ChEBI" id="CHEBI:18420"/>
        <label>3</label>
    </ligand>
</feature>
<feature type="modified residue" description="N-acetylthreonine" evidence="12 13">
    <location>
        <position position="2"/>
    </location>
</feature>
<feature type="modified residue" description="N6-succinyllysine" evidence="2">
    <location>
        <position position="151"/>
    </location>
</feature>
<feature type="modified residue" description="Phosphoserine; by PKA" evidence="13">
    <location>
        <position position="208"/>
    </location>
</feature>
<feature type="modified residue" description="Phosphotyrosine" evidence="2">
    <location>
        <position position="216"/>
    </location>
</feature>
<feature type="modified residue" description="Phosphotyrosine" evidence="2">
    <location>
        <position position="245"/>
    </location>
</feature>
<feature type="modified residue" description="Phosphotyrosine" evidence="1">
    <location>
        <position position="265"/>
    </location>
</feature>
<feature type="mutagenesis site" description="Destabilizes the inactive T-state and promotes transition to the R-state.">
    <original>A</original>
    <variation>L</variation>
    <location>
        <position position="55"/>
    </location>
</feature>
<feature type="sequence conflict" description="In Ref. 3; AA sequence." evidence="15" ref="3">
    <original>T</original>
    <variation>A</variation>
    <location>
        <position position="2"/>
    </location>
</feature>
<feature type="sequence conflict" description="In Ref. 3; AA sequence." evidence="15" ref="3">
    <original>Q</original>
    <variation>E</variation>
    <location>
        <position position="4"/>
    </location>
</feature>
<feature type="sequence conflict" description="In Ref. 2; AA sequence." evidence="15" ref="2">
    <original>E</original>
    <variation>Q</variation>
    <location>
        <position position="21"/>
    </location>
</feature>
<feature type="sequence conflict" description="In Ref. 2; AA sequence." evidence="15" ref="2">
    <original>S</original>
    <variation>T</variation>
    <location>
        <position position="97"/>
    </location>
</feature>
<feature type="sequence conflict" description="In Ref. 2; AA sequence." evidence="15" ref="2">
    <original>G</original>
    <variation>E</variation>
    <location>
        <position position="157"/>
    </location>
</feature>
<feature type="sequence conflict" description="In Ref. 2; AA sequence." evidence="15" ref="2">
    <original>D</original>
    <variation>N</variation>
    <location>
        <position position="200"/>
    </location>
</feature>
<feature type="sequence conflict" description="In Ref. 2; AA sequence." evidence="15" ref="2">
    <original>Q</original>
    <variation>E</variation>
    <location>
        <position position="229"/>
    </location>
</feature>
<feature type="helix" evidence="86">
    <location>
        <begin position="14"/>
        <end position="24"/>
    </location>
</feature>
<feature type="helix" evidence="86">
    <location>
        <begin position="30"/>
        <end position="50"/>
    </location>
</feature>
<feature type="turn" evidence="86">
    <location>
        <begin position="51"/>
        <end position="56"/>
    </location>
</feature>
<feature type="strand" evidence="86">
    <location>
        <begin position="59"/>
        <end position="64"/>
    </location>
</feature>
<feature type="strand" evidence="87">
    <location>
        <begin position="66"/>
        <end position="68"/>
    </location>
</feature>
<feature type="strand" evidence="86">
    <location>
        <begin position="70"/>
        <end position="72"/>
    </location>
</feature>
<feature type="helix" evidence="86">
    <location>
        <begin position="73"/>
        <end position="88"/>
    </location>
</feature>
<feature type="strand" evidence="86">
    <location>
        <begin position="92"/>
        <end position="97"/>
    </location>
</feature>
<feature type="strand" evidence="84">
    <location>
        <begin position="101"/>
        <end position="105"/>
    </location>
</feature>
<feature type="helix" evidence="86">
    <location>
        <begin position="108"/>
        <end position="110"/>
    </location>
</feature>
<feature type="strand" evidence="86">
    <location>
        <begin position="111"/>
        <end position="122"/>
    </location>
</feature>
<feature type="helix" evidence="86">
    <location>
        <begin position="124"/>
        <end position="126"/>
    </location>
</feature>
<feature type="turn" evidence="86">
    <location>
        <begin position="127"/>
        <end position="130"/>
    </location>
</feature>
<feature type="strand" evidence="86">
    <location>
        <begin position="133"/>
        <end position="141"/>
    </location>
</feature>
<feature type="strand" evidence="88">
    <location>
        <begin position="144"/>
        <end position="146"/>
    </location>
</feature>
<feature type="strand" evidence="89">
    <location>
        <begin position="147"/>
        <end position="149"/>
    </location>
</feature>
<feature type="helix" evidence="86">
    <location>
        <begin position="150"/>
        <end position="153"/>
    </location>
</feature>
<feature type="helix" evidence="86">
    <location>
        <begin position="157"/>
        <end position="159"/>
    </location>
</feature>
<feature type="strand" evidence="86">
    <location>
        <begin position="161"/>
        <end position="178"/>
    </location>
</feature>
<feature type="strand" evidence="86">
    <location>
        <begin position="181"/>
        <end position="188"/>
    </location>
</feature>
<feature type="turn" evidence="86">
    <location>
        <begin position="189"/>
        <end position="192"/>
    </location>
</feature>
<feature type="strand" evidence="86">
    <location>
        <begin position="193"/>
        <end position="198"/>
    </location>
</feature>
<feature type="strand" evidence="86">
    <location>
        <begin position="208"/>
        <end position="211"/>
    </location>
</feature>
<feature type="helix" evidence="86">
    <location>
        <begin position="214"/>
        <end position="219"/>
    </location>
</feature>
<feature type="helix" evidence="86">
    <location>
        <begin position="222"/>
        <end position="232"/>
    </location>
</feature>
<feature type="strand" evidence="85">
    <location>
        <begin position="235"/>
        <end position="237"/>
    </location>
</feature>
<feature type="strand" evidence="81">
    <location>
        <begin position="242"/>
        <end position="245"/>
    </location>
</feature>
<feature type="helix" evidence="86">
    <location>
        <begin position="249"/>
        <end position="259"/>
    </location>
</feature>
<feature type="strand" evidence="86">
    <location>
        <begin position="262"/>
        <end position="265"/>
    </location>
</feature>
<feature type="strand" evidence="83">
    <location>
        <begin position="268"/>
        <end position="270"/>
    </location>
</feature>
<feature type="turn" evidence="82">
    <location>
        <begin position="271"/>
        <end position="273"/>
    </location>
</feature>
<feature type="strand" evidence="86">
    <location>
        <begin position="275"/>
        <end position="277"/>
    </location>
</feature>
<feature type="turn" evidence="86">
    <location>
        <begin position="278"/>
        <end position="281"/>
    </location>
</feature>
<feature type="helix" evidence="86">
    <location>
        <begin position="282"/>
        <end position="291"/>
    </location>
</feature>
<feature type="strand" evidence="86">
    <location>
        <begin position="295"/>
        <end position="297"/>
    </location>
</feature>
<feature type="strand" evidence="86">
    <location>
        <begin position="299"/>
        <end position="302"/>
    </location>
</feature>
<feature type="helix" evidence="86">
    <location>
        <begin position="303"/>
        <end position="305"/>
    </location>
</feature>
<feature type="strand" evidence="82">
    <location>
        <begin position="309"/>
        <end position="312"/>
    </location>
</feature>
<feature type="strand" evidence="86">
    <location>
        <begin position="317"/>
        <end position="320"/>
    </location>
</feature>
<feature type="helix" evidence="86">
    <location>
        <begin position="322"/>
        <end position="334"/>
    </location>
</feature>
<sequence length="338" mass="36779">MTDQAAFDTNIVTLTRFVMEEGRKARGTGEMTQLLNSLCTAVKAISTAVRKAGIAHLYGIAGSTNVTGDQVKKLDVLSNDLVINVLKSSFATCVLVSEEDKNAIIVEPEKRGKYVVCFDPLDGSSNIDCLVSIGTIFGIYRKNSTDEPSEKDALQPGRNLVAAGYALYGSATMLVLAMVNGVNCFMLDPAIGEFILVDRDVKIKKKGSIYSINEGYAKEFDPAITEYIQRKKFPPDNSAPYGARYVGSMVADVHRTLVYGGIFMYPANKKSPKGKLRLLYECNPMAYVMEKAGGLATTGKEAVLDIVPTDIHQRAPIILGSPEDVTELLEIYQKHAAK</sequence>
<evidence type="ECO:0000250" key="1">
    <source>
        <dbReference type="UniProtKB" id="P09467"/>
    </source>
</evidence>
<evidence type="ECO:0000250" key="2">
    <source>
        <dbReference type="UniProtKB" id="Q9QXD6"/>
    </source>
</evidence>
<evidence type="ECO:0000269" key="3">
    <source>
    </source>
</evidence>
<evidence type="ECO:0000269" key="4">
    <source>
    </source>
</evidence>
<evidence type="ECO:0000269" key="5">
    <source>
    </source>
</evidence>
<evidence type="ECO:0000269" key="6">
    <source>
    </source>
</evidence>
<evidence type="ECO:0000269" key="7">
    <source>
    </source>
</evidence>
<evidence type="ECO:0000269" key="8">
    <source>
    </source>
</evidence>
<evidence type="ECO:0000269" key="9">
    <source>
    </source>
</evidence>
<evidence type="ECO:0000269" key="10">
    <source>
    </source>
</evidence>
<evidence type="ECO:0000269" key="11">
    <source>
    </source>
</evidence>
<evidence type="ECO:0000269" key="12">
    <source>
    </source>
</evidence>
<evidence type="ECO:0000269" key="13">
    <source>
    </source>
</evidence>
<evidence type="ECO:0000269" key="14">
    <source>
    </source>
</evidence>
<evidence type="ECO:0000305" key="15"/>
<evidence type="ECO:0000305" key="16">
    <source>
    </source>
</evidence>
<evidence type="ECO:0007744" key="17">
    <source>
        <dbReference type="PDB" id="1CNQ"/>
    </source>
</evidence>
<evidence type="ECO:0007744" key="18">
    <source>
        <dbReference type="PDB" id="1EYI"/>
    </source>
</evidence>
<evidence type="ECO:0007744" key="19">
    <source>
        <dbReference type="PDB" id="1EYJ"/>
    </source>
</evidence>
<evidence type="ECO:0007744" key="20">
    <source>
        <dbReference type="PDB" id="1EYK"/>
    </source>
</evidence>
<evidence type="ECO:0007744" key="21">
    <source>
        <dbReference type="PDB" id="1FBC"/>
    </source>
</evidence>
<evidence type="ECO:0007744" key="22">
    <source>
        <dbReference type="PDB" id="1FBD"/>
    </source>
</evidence>
<evidence type="ECO:0007744" key="23">
    <source>
        <dbReference type="PDB" id="1FBE"/>
    </source>
</evidence>
<evidence type="ECO:0007744" key="24">
    <source>
        <dbReference type="PDB" id="1FBH"/>
    </source>
</evidence>
<evidence type="ECO:0007744" key="25">
    <source>
        <dbReference type="PDB" id="1FBP"/>
    </source>
</evidence>
<evidence type="ECO:0007744" key="26">
    <source>
        <dbReference type="PDB" id="1FJ6"/>
    </source>
</evidence>
<evidence type="ECO:0007744" key="27">
    <source>
        <dbReference type="PDB" id="1FJ9"/>
    </source>
</evidence>
<evidence type="ECO:0007744" key="28">
    <source>
        <dbReference type="PDB" id="1FPB"/>
    </source>
</evidence>
<evidence type="ECO:0007744" key="29">
    <source>
        <dbReference type="PDB" id="1FPD"/>
    </source>
</evidence>
<evidence type="ECO:0007744" key="30">
    <source>
        <dbReference type="PDB" id="1FPE"/>
    </source>
</evidence>
<evidence type="ECO:0007744" key="31">
    <source>
        <dbReference type="PDB" id="1FPF"/>
    </source>
</evidence>
<evidence type="ECO:0007744" key="32">
    <source>
        <dbReference type="PDB" id="1FPG"/>
    </source>
</evidence>
<evidence type="ECO:0007744" key="33">
    <source>
        <dbReference type="PDB" id="1FPI"/>
    </source>
</evidence>
<evidence type="ECO:0007744" key="34">
    <source>
        <dbReference type="PDB" id="1FPJ"/>
    </source>
</evidence>
<evidence type="ECO:0007744" key="35">
    <source>
        <dbReference type="PDB" id="1FPL"/>
    </source>
</evidence>
<evidence type="ECO:0007744" key="36">
    <source>
        <dbReference type="PDB" id="1FRP"/>
    </source>
</evidence>
<evidence type="ECO:0007744" key="37">
    <source>
        <dbReference type="PDB" id="1FSA"/>
    </source>
</evidence>
<evidence type="ECO:0007744" key="38">
    <source>
        <dbReference type="PDB" id="1KZ8"/>
    </source>
</evidence>
<evidence type="ECO:0007744" key="39">
    <source>
        <dbReference type="PDB" id="1LEV"/>
    </source>
</evidence>
<evidence type="ECO:0007744" key="40">
    <source>
        <dbReference type="PDB" id="1NUW"/>
    </source>
</evidence>
<evidence type="ECO:0007744" key="41">
    <source>
        <dbReference type="PDB" id="1NUX"/>
    </source>
</evidence>
<evidence type="ECO:0007744" key="42">
    <source>
        <dbReference type="PDB" id="1NUY"/>
    </source>
</evidence>
<evidence type="ECO:0007744" key="43">
    <source>
        <dbReference type="PDB" id="1NUZ"/>
    </source>
</evidence>
<evidence type="ECO:0007744" key="44">
    <source>
        <dbReference type="PDB" id="1NV0"/>
    </source>
</evidence>
<evidence type="ECO:0007744" key="45">
    <source>
        <dbReference type="PDB" id="1NV1"/>
    </source>
</evidence>
<evidence type="ECO:0007744" key="46">
    <source>
        <dbReference type="PDB" id="1NV2"/>
    </source>
</evidence>
<evidence type="ECO:0007744" key="47">
    <source>
        <dbReference type="PDB" id="1NV3"/>
    </source>
</evidence>
<evidence type="ECO:0007744" key="48">
    <source>
        <dbReference type="PDB" id="1NV4"/>
    </source>
</evidence>
<evidence type="ECO:0007744" key="49">
    <source>
        <dbReference type="PDB" id="1NV5"/>
    </source>
</evidence>
<evidence type="ECO:0007744" key="50">
    <source>
        <dbReference type="PDB" id="1NV6"/>
    </source>
</evidence>
<evidence type="ECO:0007744" key="51">
    <source>
        <dbReference type="PDB" id="1NV7"/>
    </source>
</evidence>
<evidence type="ECO:0007744" key="52">
    <source>
        <dbReference type="PDB" id="1Q9D"/>
    </source>
</evidence>
<evidence type="ECO:0007744" key="53">
    <source>
        <dbReference type="PDB" id="1RDX"/>
    </source>
</evidence>
<evidence type="ECO:0007744" key="54">
    <source>
        <dbReference type="PDB" id="1RDY"/>
    </source>
</evidence>
<evidence type="ECO:0007744" key="55">
    <source>
        <dbReference type="PDB" id="1RDZ"/>
    </source>
</evidence>
<evidence type="ECO:0007744" key="56">
    <source>
        <dbReference type="PDB" id="1YXI"/>
    </source>
</evidence>
<evidence type="ECO:0007744" key="57">
    <source>
        <dbReference type="PDB" id="1YYZ"/>
    </source>
</evidence>
<evidence type="ECO:0007744" key="58">
    <source>
        <dbReference type="PDB" id="1YZ0"/>
    </source>
</evidence>
<evidence type="ECO:0007744" key="59">
    <source>
        <dbReference type="PDB" id="2F3B"/>
    </source>
</evidence>
<evidence type="ECO:0007744" key="60">
    <source>
        <dbReference type="PDB" id="2F3D"/>
    </source>
</evidence>
<evidence type="ECO:0007744" key="61">
    <source>
        <dbReference type="PDB" id="2FBP"/>
    </source>
</evidence>
<evidence type="ECO:0007744" key="62">
    <source>
        <dbReference type="PDB" id="2QVU"/>
    </source>
</evidence>
<evidence type="ECO:0007744" key="63">
    <source>
        <dbReference type="PDB" id="2QVV"/>
    </source>
</evidence>
<evidence type="ECO:0007744" key="64">
    <source>
        <dbReference type="PDB" id="3FBP"/>
    </source>
</evidence>
<evidence type="ECO:0007744" key="65">
    <source>
        <dbReference type="PDB" id="4FBP"/>
    </source>
</evidence>
<evidence type="ECO:0007744" key="66">
    <source>
        <dbReference type="PDB" id="4GBV"/>
    </source>
</evidence>
<evidence type="ECO:0007744" key="67">
    <source>
        <dbReference type="PDB" id="4GBW"/>
    </source>
</evidence>
<evidence type="ECO:0007744" key="68">
    <source>
        <dbReference type="PDB" id="4GWS"/>
    </source>
</evidence>
<evidence type="ECO:0007744" key="69">
    <source>
        <dbReference type="PDB" id="4GWU"/>
    </source>
</evidence>
<evidence type="ECO:0007744" key="70">
    <source>
        <dbReference type="PDB" id="4GWW"/>
    </source>
</evidence>
<evidence type="ECO:0007744" key="71">
    <source>
        <dbReference type="PDB" id="4GWX"/>
    </source>
</evidence>
<evidence type="ECO:0007744" key="72">
    <source>
        <dbReference type="PDB" id="4GWY"/>
    </source>
</evidence>
<evidence type="ECO:0007744" key="73">
    <source>
        <dbReference type="PDB" id="4GWZ"/>
    </source>
</evidence>
<evidence type="ECO:0007744" key="74">
    <source>
        <dbReference type="PDB" id="4GX3"/>
    </source>
</evidence>
<evidence type="ECO:0007744" key="75">
    <source>
        <dbReference type="PDB" id="4GX4"/>
    </source>
</evidence>
<evidence type="ECO:0007744" key="76">
    <source>
        <dbReference type="PDB" id="4GX6"/>
    </source>
</evidence>
<evidence type="ECO:0007744" key="77">
    <source>
        <dbReference type="PDB" id="4H45"/>
    </source>
</evidence>
<evidence type="ECO:0007744" key="78">
    <source>
        <dbReference type="PDB" id="4H46"/>
    </source>
</evidence>
<evidence type="ECO:0007744" key="79">
    <source>
        <dbReference type="PDB" id="4KXP"/>
    </source>
</evidence>
<evidence type="ECO:0007744" key="80">
    <source>
        <dbReference type="PDB" id="5FBP"/>
    </source>
</evidence>
<evidence type="ECO:0007829" key="81">
    <source>
        <dbReference type="PDB" id="1FBC"/>
    </source>
</evidence>
<evidence type="ECO:0007829" key="82">
    <source>
        <dbReference type="PDB" id="1FBP"/>
    </source>
</evidence>
<evidence type="ECO:0007829" key="83">
    <source>
        <dbReference type="PDB" id="1FPD"/>
    </source>
</evidence>
<evidence type="ECO:0007829" key="84">
    <source>
        <dbReference type="PDB" id="1FSA"/>
    </source>
</evidence>
<evidence type="ECO:0007829" key="85">
    <source>
        <dbReference type="PDB" id="1LEV"/>
    </source>
</evidence>
<evidence type="ECO:0007829" key="86">
    <source>
        <dbReference type="PDB" id="1NUW"/>
    </source>
</evidence>
<evidence type="ECO:0007829" key="87">
    <source>
        <dbReference type="PDB" id="1NV1"/>
    </source>
</evidence>
<evidence type="ECO:0007829" key="88">
    <source>
        <dbReference type="PDB" id="2QVU"/>
    </source>
</evidence>
<evidence type="ECO:0007829" key="89">
    <source>
        <dbReference type="PDB" id="3FBP"/>
    </source>
</evidence>
<dbReference type="EC" id="3.1.3.11" evidence="7 16"/>
<dbReference type="EMBL" id="M86347">
    <property type="protein sequence ID" value="AAA31035.1"/>
    <property type="molecule type" value="mRNA"/>
</dbReference>
<dbReference type="PIR" id="S37696">
    <property type="entry name" value="PAPGF"/>
</dbReference>
<dbReference type="RefSeq" id="NP_999144.1">
    <property type="nucleotide sequence ID" value="NM_213979.1"/>
</dbReference>
<dbReference type="PDB" id="1CNQ">
    <property type="method" value="X-ray"/>
    <property type="resolution" value="2.27 A"/>
    <property type="chains" value="A=2-338"/>
</dbReference>
<dbReference type="PDB" id="1EYI">
    <property type="method" value="X-ray"/>
    <property type="resolution" value="2.32 A"/>
    <property type="chains" value="A=2-338"/>
</dbReference>
<dbReference type="PDB" id="1EYJ">
    <property type="method" value="X-ray"/>
    <property type="resolution" value="2.28 A"/>
    <property type="chains" value="A/B=2-338"/>
</dbReference>
<dbReference type="PDB" id="1EYK">
    <property type="method" value="X-ray"/>
    <property type="resolution" value="2.23 A"/>
    <property type="chains" value="A/B=2-338"/>
</dbReference>
<dbReference type="PDB" id="1FBC">
    <property type="method" value="X-ray"/>
    <property type="resolution" value="2.60 A"/>
    <property type="chains" value="A/B=2-336"/>
</dbReference>
<dbReference type="PDB" id="1FBD">
    <property type="method" value="X-ray"/>
    <property type="resolution" value="2.90 A"/>
    <property type="chains" value="A/B=2-336"/>
</dbReference>
<dbReference type="PDB" id="1FBE">
    <property type="method" value="X-ray"/>
    <property type="resolution" value="3.00 A"/>
    <property type="chains" value="A/B=2-336"/>
</dbReference>
<dbReference type="PDB" id="1FBF">
    <property type="method" value="X-ray"/>
    <property type="resolution" value="2.70 A"/>
    <property type="chains" value="A/B=2-336"/>
</dbReference>
<dbReference type="PDB" id="1FBG">
    <property type="method" value="X-ray"/>
    <property type="resolution" value="3.00 A"/>
    <property type="chains" value="A/B=2-336"/>
</dbReference>
<dbReference type="PDB" id="1FBH">
    <property type="method" value="X-ray"/>
    <property type="resolution" value="2.50 A"/>
    <property type="chains" value="A/B=2-336"/>
</dbReference>
<dbReference type="PDB" id="1FBP">
    <property type="method" value="X-ray"/>
    <property type="resolution" value="2.50 A"/>
    <property type="chains" value="A/B=2-336"/>
</dbReference>
<dbReference type="PDB" id="1FJ6">
    <property type="method" value="X-ray"/>
    <property type="resolution" value="2.50 A"/>
    <property type="chains" value="A=2-338"/>
</dbReference>
<dbReference type="PDB" id="1FJ9">
    <property type="method" value="X-ray"/>
    <property type="resolution" value="2.50 A"/>
    <property type="chains" value="A/B=2-338"/>
</dbReference>
<dbReference type="PDB" id="1FPB">
    <property type="method" value="X-ray"/>
    <property type="resolution" value="2.60 A"/>
    <property type="chains" value="A/B=2-336"/>
</dbReference>
<dbReference type="PDB" id="1FPD">
    <property type="method" value="X-ray"/>
    <property type="resolution" value="2.10 A"/>
    <property type="chains" value="A/B=2-336"/>
</dbReference>
<dbReference type="PDB" id="1FPE">
    <property type="method" value="X-ray"/>
    <property type="resolution" value="2.20 A"/>
    <property type="chains" value="A/B=2-336"/>
</dbReference>
<dbReference type="PDB" id="1FPF">
    <property type="method" value="X-ray"/>
    <property type="resolution" value="2.10 A"/>
    <property type="chains" value="A/B=2-336"/>
</dbReference>
<dbReference type="PDB" id="1FPG">
    <property type="method" value="X-ray"/>
    <property type="resolution" value="2.30 A"/>
    <property type="chains" value="A/B=2-336"/>
</dbReference>
<dbReference type="PDB" id="1FPI">
    <property type="method" value="X-ray"/>
    <property type="resolution" value="2.30 A"/>
    <property type="chains" value="A/B=2-336"/>
</dbReference>
<dbReference type="PDB" id="1FPJ">
    <property type="method" value="X-ray"/>
    <property type="resolution" value="2.20 A"/>
    <property type="chains" value="A/B=2-336"/>
</dbReference>
<dbReference type="PDB" id="1FPK">
    <property type="method" value="X-ray"/>
    <property type="resolution" value="3.00 A"/>
    <property type="chains" value="A/B=2-336"/>
</dbReference>
<dbReference type="PDB" id="1FPL">
    <property type="method" value="X-ray"/>
    <property type="resolution" value="2.30 A"/>
    <property type="chains" value="A/B=2-336"/>
</dbReference>
<dbReference type="PDB" id="1FRP">
    <property type="method" value="X-ray"/>
    <property type="resolution" value="2.00 A"/>
    <property type="chains" value="A/B=2-336"/>
</dbReference>
<dbReference type="PDB" id="1FSA">
    <property type="method" value="X-ray"/>
    <property type="resolution" value="2.30 A"/>
    <property type="chains" value="A/B=2-338"/>
</dbReference>
<dbReference type="PDB" id="1KZ8">
    <property type="method" value="X-ray"/>
    <property type="resolution" value="2.00 A"/>
    <property type="chains" value="A/F=2-338"/>
</dbReference>
<dbReference type="PDB" id="1LEV">
    <property type="method" value="X-ray"/>
    <property type="resolution" value="2.15 A"/>
    <property type="chains" value="A/F=2-338"/>
</dbReference>
<dbReference type="PDB" id="1NUW">
    <property type="method" value="X-ray"/>
    <property type="resolution" value="1.30 A"/>
    <property type="chains" value="A=2-338"/>
</dbReference>
<dbReference type="PDB" id="1NUX">
    <property type="method" value="X-ray"/>
    <property type="resolution" value="1.60 A"/>
    <property type="chains" value="A=2-338"/>
</dbReference>
<dbReference type="PDB" id="1NUY">
    <property type="method" value="X-ray"/>
    <property type="resolution" value="1.30 A"/>
    <property type="chains" value="A=2-338"/>
</dbReference>
<dbReference type="PDB" id="1NUZ">
    <property type="method" value="X-ray"/>
    <property type="resolution" value="1.90 A"/>
    <property type="chains" value="A=2-338"/>
</dbReference>
<dbReference type="PDB" id="1NV0">
    <property type="method" value="X-ray"/>
    <property type="resolution" value="1.80 A"/>
    <property type="chains" value="A=2-338"/>
</dbReference>
<dbReference type="PDB" id="1NV1">
    <property type="method" value="X-ray"/>
    <property type="resolution" value="1.90 A"/>
    <property type="chains" value="A=2-338"/>
</dbReference>
<dbReference type="PDB" id="1NV2">
    <property type="method" value="X-ray"/>
    <property type="resolution" value="2.10 A"/>
    <property type="chains" value="A=2-338"/>
</dbReference>
<dbReference type="PDB" id="1NV3">
    <property type="method" value="X-ray"/>
    <property type="resolution" value="2.00 A"/>
    <property type="chains" value="A=2-338"/>
</dbReference>
<dbReference type="PDB" id="1NV4">
    <property type="method" value="X-ray"/>
    <property type="resolution" value="1.90 A"/>
    <property type="chains" value="A=2-338"/>
</dbReference>
<dbReference type="PDB" id="1NV5">
    <property type="method" value="X-ray"/>
    <property type="resolution" value="1.90 A"/>
    <property type="chains" value="A=2-338"/>
</dbReference>
<dbReference type="PDB" id="1NV6">
    <property type="method" value="X-ray"/>
    <property type="resolution" value="2.15 A"/>
    <property type="chains" value="A=2-338"/>
</dbReference>
<dbReference type="PDB" id="1NV7">
    <property type="method" value="X-ray"/>
    <property type="resolution" value="2.15 A"/>
    <property type="chains" value="A/B=2-338"/>
</dbReference>
<dbReference type="PDB" id="1Q9D">
    <property type="method" value="X-ray"/>
    <property type="resolution" value="2.35 A"/>
    <property type="chains" value="A/B=2-338"/>
</dbReference>
<dbReference type="PDB" id="1RDX">
    <property type="method" value="X-ray"/>
    <property type="resolution" value="2.75 A"/>
    <property type="chains" value="A/B=2-338"/>
</dbReference>
<dbReference type="PDB" id="1RDY">
    <property type="method" value="X-ray"/>
    <property type="resolution" value="2.20 A"/>
    <property type="chains" value="A/B=2-338"/>
</dbReference>
<dbReference type="PDB" id="1RDZ">
    <property type="method" value="X-ray"/>
    <property type="resolution" value="2.05 A"/>
    <property type="chains" value="A/B=2-338"/>
</dbReference>
<dbReference type="PDB" id="1YXI">
    <property type="method" value="X-ray"/>
    <property type="resolution" value="2.00 A"/>
    <property type="chains" value="A=2-338"/>
</dbReference>
<dbReference type="PDB" id="1YYZ">
    <property type="method" value="X-ray"/>
    <property type="resolution" value="1.85 A"/>
    <property type="chains" value="A=2-338"/>
</dbReference>
<dbReference type="PDB" id="1YZ0">
    <property type="method" value="X-ray"/>
    <property type="resolution" value="2.07 A"/>
    <property type="chains" value="A/B=2-338"/>
</dbReference>
<dbReference type="PDB" id="2F3B">
    <property type="method" value="X-ray"/>
    <property type="resolution" value="1.80 A"/>
    <property type="chains" value="A=1-338"/>
</dbReference>
<dbReference type="PDB" id="2F3D">
    <property type="method" value="X-ray"/>
    <property type="resolution" value="1.83 A"/>
    <property type="chains" value="A=1-338"/>
</dbReference>
<dbReference type="PDB" id="2FBP">
    <property type="method" value="X-ray"/>
    <property type="resolution" value="2.80 A"/>
    <property type="chains" value="A/B=2-336"/>
</dbReference>
<dbReference type="PDB" id="2QVU">
    <property type="method" value="X-ray"/>
    <property type="resolution" value="1.50 A"/>
    <property type="chains" value="A/B=2-338"/>
</dbReference>
<dbReference type="PDB" id="2QVV">
    <property type="method" value="X-ray"/>
    <property type="resolution" value="2.03 A"/>
    <property type="chains" value="A/B=2-338"/>
</dbReference>
<dbReference type="PDB" id="3FBP">
    <property type="method" value="X-ray"/>
    <property type="resolution" value="2.80 A"/>
    <property type="chains" value="A/B=2-336"/>
</dbReference>
<dbReference type="PDB" id="4FBP">
    <property type="method" value="X-ray"/>
    <property type="resolution" value="2.50 A"/>
    <property type="chains" value="A/B/C/D=2-336"/>
</dbReference>
<dbReference type="PDB" id="4GBV">
    <property type="method" value="X-ray"/>
    <property type="resolution" value="2.90 A"/>
    <property type="chains" value="A=2-336"/>
</dbReference>
<dbReference type="PDB" id="4GBW">
    <property type="method" value="X-ray"/>
    <property type="resolution" value="2.00 A"/>
    <property type="chains" value="A=2-336"/>
</dbReference>
<dbReference type="PDB" id="4GWS">
    <property type="method" value="X-ray"/>
    <property type="resolution" value="2.75 A"/>
    <property type="chains" value="A/B=2-338"/>
</dbReference>
<dbReference type="PDB" id="4GWU">
    <property type="method" value="X-ray"/>
    <property type="resolution" value="3.00 A"/>
    <property type="chains" value="A=2-338"/>
</dbReference>
<dbReference type="PDB" id="4GWW">
    <property type="method" value="X-ray"/>
    <property type="resolution" value="3.20 A"/>
    <property type="chains" value="A=2-338"/>
</dbReference>
<dbReference type="PDB" id="4GWX">
    <property type="method" value="X-ray"/>
    <property type="resolution" value="2.35 A"/>
    <property type="chains" value="A=2-338"/>
</dbReference>
<dbReference type="PDB" id="4GWY">
    <property type="method" value="X-ray"/>
    <property type="resolution" value="3.00 A"/>
    <property type="chains" value="A=2-338"/>
</dbReference>
<dbReference type="PDB" id="4GWZ">
    <property type="method" value="X-ray"/>
    <property type="resolution" value="2.60 A"/>
    <property type="chains" value="A/B=2-338"/>
</dbReference>
<dbReference type="PDB" id="4GX3">
    <property type="method" value="X-ray"/>
    <property type="resolution" value="2.25 A"/>
    <property type="chains" value="A/B=2-338"/>
</dbReference>
<dbReference type="PDB" id="4GX4">
    <property type="method" value="X-ray"/>
    <property type="resolution" value="2.50 A"/>
    <property type="chains" value="A/B=2-338"/>
</dbReference>
<dbReference type="PDB" id="4GX6">
    <property type="method" value="X-ray"/>
    <property type="resolution" value="2.50 A"/>
    <property type="chains" value="A/B=2-338"/>
</dbReference>
<dbReference type="PDB" id="4H45">
    <property type="method" value="X-ray"/>
    <property type="resolution" value="3.10 A"/>
    <property type="chains" value="A=2-338"/>
</dbReference>
<dbReference type="PDB" id="4H46">
    <property type="method" value="X-ray"/>
    <property type="resolution" value="2.50 A"/>
    <property type="chains" value="A=2-338"/>
</dbReference>
<dbReference type="PDB" id="4KXP">
    <property type="method" value="X-ray"/>
    <property type="resolution" value="2.70 A"/>
    <property type="chains" value="A/B=1-338"/>
</dbReference>
<dbReference type="PDB" id="5FBP">
    <property type="method" value="X-ray"/>
    <property type="resolution" value="2.10 A"/>
    <property type="chains" value="A/B=2-336"/>
</dbReference>
<dbReference type="PDBsum" id="1CNQ"/>
<dbReference type="PDBsum" id="1EYI"/>
<dbReference type="PDBsum" id="1EYJ"/>
<dbReference type="PDBsum" id="1EYK"/>
<dbReference type="PDBsum" id="1FBC"/>
<dbReference type="PDBsum" id="1FBD"/>
<dbReference type="PDBsum" id="1FBE"/>
<dbReference type="PDBsum" id="1FBF"/>
<dbReference type="PDBsum" id="1FBG"/>
<dbReference type="PDBsum" id="1FBH"/>
<dbReference type="PDBsum" id="1FBP"/>
<dbReference type="PDBsum" id="1FJ6"/>
<dbReference type="PDBsum" id="1FJ9"/>
<dbReference type="PDBsum" id="1FPB"/>
<dbReference type="PDBsum" id="1FPD"/>
<dbReference type="PDBsum" id="1FPE"/>
<dbReference type="PDBsum" id="1FPF"/>
<dbReference type="PDBsum" id="1FPG"/>
<dbReference type="PDBsum" id="1FPI"/>
<dbReference type="PDBsum" id="1FPJ"/>
<dbReference type="PDBsum" id="1FPK"/>
<dbReference type="PDBsum" id="1FPL"/>
<dbReference type="PDBsum" id="1FRP"/>
<dbReference type="PDBsum" id="1FSA"/>
<dbReference type="PDBsum" id="1KZ8"/>
<dbReference type="PDBsum" id="1LEV"/>
<dbReference type="PDBsum" id="1NUW"/>
<dbReference type="PDBsum" id="1NUX"/>
<dbReference type="PDBsum" id="1NUY"/>
<dbReference type="PDBsum" id="1NUZ"/>
<dbReference type="PDBsum" id="1NV0"/>
<dbReference type="PDBsum" id="1NV1"/>
<dbReference type="PDBsum" id="1NV2"/>
<dbReference type="PDBsum" id="1NV3"/>
<dbReference type="PDBsum" id="1NV4"/>
<dbReference type="PDBsum" id="1NV5"/>
<dbReference type="PDBsum" id="1NV6"/>
<dbReference type="PDBsum" id="1NV7"/>
<dbReference type="PDBsum" id="1Q9D"/>
<dbReference type="PDBsum" id="1RDX"/>
<dbReference type="PDBsum" id="1RDY"/>
<dbReference type="PDBsum" id="1RDZ"/>
<dbReference type="PDBsum" id="1YXI"/>
<dbReference type="PDBsum" id="1YYZ"/>
<dbReference type="PDBsum" id="1YZ0"/>
<dbReference type="PDBsum" id="2F3B"/>
<dbReference type="PDBsum" id="2F3D"/>
<dbReference type="PDBsum" id="2FBP"/>
<dbReference type="PDBsum" id="2QVU"/>
<dbReference type="PDBsum" id="2QVV"/>
<dbReference type="PDBsum" id="3FBP"/>
<dbReference type="PDBsum" id="4FBP"/>
<dbReference type="PDBsum" id="4GBV"/>
<dbReference type="PDBsum" id="4GBW"/>
<dbReference type="PDBsum" id="4GWS"/>
<dbReference type="PDBsum" id="4GWU"/>
<dbReference type="PDBsum" id="4GWW"/>
<dbReference type="PDBsum" id="4GWX"/>
<dbReference type="PDBsum" id="4GWY"/>
<dbReference type="PDBsum" id="4GWZ"/>
<dbReference type="PDBsum" id="4GX3"/>
<dbReference type="PDBsum" id="4GX4"/>
<dbReference type="PDBsum" id="4GX6"/>
<dbReference type="PDBsum" id="4H45"/>
<dbReference type="PDBsum" id="4H46"/>
<dbReference type="PDBsum" id="4KXP"/>
<dbReference type="PDBsum" id="5FBP"/>
<dbReference type="SMR" id="P00636"/>
<dbReference type="FunCoup" id="P00636">
    <property type="interactions" value="731"/>
</dbReference>
<dbReference type="STRING" id="9823.ENSSSCP00000049752"/>
<dbReference type="BindingDB" id="P00636"/>
<dbReference type="ChEMBL" id="CHEMBL2263"/>
<dbReference type="DrugCentral" id="P00636"/>
<dbReference type="iPTMnet" id="P00636"/>
<dbReference type="PaxDb" id="9823-ENSSSCP00000011671"/>
<dbReference type="PeptideAtlas" id="P00636"/>
<dbReference type="Ensembl" id="ENSSSCT00000065852.3">
    <property type="protein sequence ID" value="ENSSSCP00000049752.1"/>
    <property type="gene ID" value="ENSSSCG00000031174.3"/>
</dbReference>
<dbReference type="Ensembl" id="ENSSSCT00015088932.1">
    <property type="protein sequence ID" value="ENSSSCP00015036278.1"/>
    <property type="gene ID" value="ENSSSCG00015066376.1"/>
</dbReference>
<dbReference type="Ensembl" id="ENSSSCT00015089465.1">
    <property type="protein sequence ID" value="ENSSSCP00015036500.1"/>
    <property type="gene ID" value="ENSSSCG00015066376.1"/>
</dbReference>
<dbReference type="Ensembl" id="ENSSSCT00025019008.1">
    <property type="protein sequence ID" value="ENSSSCP00025007679.1"/>
    <property type="gene ID" value="ENSSSCG00025014230.1"/>
</dbReference>
<dbReference type="Ensembl" id="ENSSSCT00030006729.1">
    <property type="protein sequence ID" value="ENSSSCP00030002968.1"/>
    <property type="gene ID" value="ENSSSCG00030004973.1"/>
</dbReference>
<dbReference type="Ensembl" id="ENSSSCT00035035384.1">
    <property type="protein sequence ID" value="ENSSSCP00035014027.1"/>
    <property type="gene ID" value="ENSSSCG00035026802.1"/>
</dbReference>
<dbReference type="Ensembl" id="ENSSSCT00050015866.1">
    <property type="protein sequence ID" value="ENSSSCP00050006487.1"/>
    <property type="gene ID" value="ENSSSCG00050011780.1"/>
</dbReference>
<dbReference type="Ensembl" id="ENSSSCT00055027666.1">
    <property type="protein sequence ID" value="ENSSSCP00055022027.1"/>
    <property type="gene ID" value="ENSSSCG00055014004.1"/>
</dbReference>
<dbReference type="Ensembl" id="ENSSSCT00070042384.1">
    <property type="protein sequence ID" value="ENSSSCP00070035635.1"/>
    <property type="gene ID" value="ENSSSCG00070021304.1"/>
</dbReference>
<dbReference type="Ensembl" id="ENSSSCT00085001969">
    <property type="protein sequence ID" value="ENSSSCP00085001490"/>
    <property type="gene ID" value="ENSSSCG00085001316"/>
</dbReference>
<dbReference type="Ensembl" id="ENSSSCT00090015038">
    <property type="protein sequence ID" value="ENSSSCP00090009687"/>
    <property type="gene ID" value="ENSSSCG00090008378"/>
</dbReference>
<dbReference type="Ensembl" id="ENSSSCT00090015073">
    <property type="protein sequence ID" value="ENSSSCP00090009712"/>
    <property type="gene ID" value="ENSSSCG00090008378"/>
</dbReference>
<dbReference type="Ensembl" id="ENSSSCT00105052836">
    <property type="protein sequence ID" value="ENSSSCP00105037187"/>
    <property type="gene ID" value="ENSSSCG00105027772"/>
</dbReference>
<dbReference type="Ensembl" id="ENSSSCT00110036997">
    <property type="protein sequence ID" value="ENSSSCP00110025438"/>
    <property type="gene ID" value="ENSSSCG00110019279"/>
</dbReference>
<dbReference type="Ensembl" id="ENSSSCT00115015035">
    <property type="protein sequence ID" value="ENSSSCP00115014208"/>
    <property type="gene ID" value="ENSSSCG00115008585"/>
</dbReference>
<dbReference type="Ensembl" id="ENSSSCT00130040247">
    <property type="protein sequence ID" value="ENSSSCP00130028408"/>
    <property type="gene ID" value="ENSSSCG00130020722"/>
</dbReference>
<dbReference type="GeneID" id="397038"/>
<dbReference type="KEGG" id="ssc:397038"/>
<dbReference type="CTD" id="2203"/>
<dbReference type="VGNC" id="VGNC:96297">
    <property type="gene designation" value="FBP1"/>
</dbReference>
<dbReference type="eggNOG" id="KOG1458">
    <property type="taxonomic scope" value="Eukaryota"/>
</dbReference>
<dbReference type="GeneTree" id="ENSGT00390000015513"/>
<dbReference type="InParanoid" id="P00636"/>
<dbReference type="OMA" id="YIPENCP"/>
<dbReference type="OrthoDB" id="10256725at2759"/>
<dbReference type="BRENDA" id="3.1.3.11">
    <property type="organism ID" value="6170"/>
</dbReference>
<dbReference type="Reactome" id="R-SSC-70263">
    <property type="pathway name" value="Gluconeogenesis"/>
</dbReference>
<dbReference type="SABIO-RK" id="P00636"/>
<dbReference type="UniPathway" id="UPA00138"/>
<dbReference type="EvolutionaryTrace" id="P00636"/>
<dbReference type="PRO" id="PR:P00636"/>
<dbReference type="Proteomes" id="UP000008227">
    <property type="component" value="Chromosome 10"/>
</dbReference>
<dbReference type="Proteomes" id="UP000314985">
    <property type="component" value="Chromosome 10"/>
</dbReference>
<dbReference type="Proteomes" id="UP000694570">
    <property type="component" value="Unplaced"/>
</dbReference>
<dbReference type="Proteomes" id="UP000694571">
    <property type="component" value="Unplaced"/>
</dbReference>
<dbReference type="Proteomes" id="UP000694720">
    <property type="component" value="Unplaced"/>
</dbReference>
<dbReference type="Proteomes" id="UP000694722">
    <property type="component" value="Unplaced"/>
</dbReference>
<dbReference type="Proteomes" id="UP000694723">
    <property type="component" value="Unplaced"/>
</dbReference>
<dbReference type="Proteomes" id="UP000694724">
    <property type="component" value="Unplaced"/>
</dbReference>
<dbReference type="Proteomes" id="UP000694725">
    <property type="component" value="Unplaced"/>
</dbReference>
<dbReference type="Proteomes" id="UP000694726">
    <property type="component" value="Unplaced"/>
</dbReference>
<dbReference type="Proteomes" id="UP000694727">
    <property type="component" value="Unplaced"/>
</dbReference>
<dbReference type="Proteomes" id="UP000694728">
    <property type="component" value="Unplaced"/>
</dbReference>
<dbReference type="Bgee" id="ENSSSCG00000031174">
    <property type="expression patterns" value="Expressed in kidney and 44 other cell types or tissues"/>
</dbReference>
<dbReference type="ExpressionAtlas" id="P00636">
    <property type="expression patterns" value="baseline and differential"/>
</dbReference>
<dbReference type="GO" id="GO:0005737">
    <property type="term" value="C:cytoplasm"/>
    <property type="evidence" value="ECO:0000250"/>
    <property type="project" value="UniProtKB"/>
</dbReference>
<dbReference type="GO" id="GO:0005829">
    <property type="term" value="C:cytosol"/>
    <property type="evidence" value="ECO:0000318"/>
    <property type="project" value="GO_Central"/>
</dbReference>
<dbReference type="GO" id="GO:0005634">
    <property type="term" value="C:nucleus"/>
    <property type="evidence" value="ECO:0007669"/>
    <property type="project" value="Ensembl"/>
</dbReference>
<dbReference type="GO" id="GO:0016208">
    <property type="term" value="F:AMP binding"/>
    <property type="evidence" value="ECO:0000250"/>
    <property type="project" value="UniProtKB"/>
</dbReference>
<dbReference type="GO" id="GO:0042132">
    <property type="term" value="F:fructose 1,6-bisphosphate 1-phosphatase activity"/>
    <property type="evidence" value="ECO:0000250"/>
    <property type="project" value="UniProtKB"/>
</dbReference>
<dbReference type="GO" id="GO:0042802">
    <property type="term" value="F:identical protein binding"/>
    <property type="evidence" value="ECO:0000250"/>
    <property type="project" value="UniProtKB"/>
</dbReference>
<dbReference type="GO" id="GO:0046872">
    <property type="term" value="F:metal ion binding"/>
    <property type="evidence" value="ECO:0000250"/>
    <property type="project" value="UniProtKB"/>
</dbReference>
<dbReference type="GO" id="GO:0048029">
    <property type="term" value="F:monosaccharide binding"/>
    <property type="evidence" value="ECO:0000250"/>
    <property type="project" value="UniProtKB"/>
</dbReference>
<dbReference type="GO" id="GO:0061629">
    <property type="term" value="F:RNA polymerase II-specific DNA-binding transcription factor binding"/>
    <property type="evidence" value="ECO:0007669"/>
    <property type="project" value="Ensembl"/>
</dbReference>
<dbReference type="GO" id="GO:0071286">
    <property type="term" value="P:cellular response to magnesium ion"/>
    <property type="evidence" value="ECO:0000250"/>
    <property type="project" value="UniProtKB"/>
</dbReference>
<dbReference type="GO" id="GO:0071466">
    <property type="term" value="P:cellular response to xenobiotic stimulus"/>
    <property type="evidence" value="ECO:0000250"/>
    <property type="project" value="UniProtKB"/>
</dbReference>
<dbReference type="GO" id="GO:0030388">
    <property type="term" value="P:fructose 1,6-bisphosphate metabolic process"/>
    <property type="evidence" value="ECO:0000318"/>
    <property type="project" value="GO_Central"/>
</dbReference>
<dbReference type="GO" id="GO:0006002">
    <property type="term" value="P:fructose 6-phosphate metabolic process"/>
    <property type="evidence" value="ECO:0000250"/>
    <property type="project" value="UniProtKB"/>
</dbReference>
<dbReference type="GO" id="GO:0006000">
    <property type="term" value="P:fructose metabolic process"/>
    <property type="evidence" value="ECO:0000318"/>
    <property type="project" value="GO_Central"/>
</dbReference>
<dbReference type="GO" id="GO:0006094">
    <property type="term" value="P:gluconeogenesis"/>
    <property type="evidence" value="ECO:0000250"/>
    <property type="project" value="UniProtKB"/>
</dbReference>
<dbReference type="GO" id="GO:0030308">
    <property type="term" value="P:negative regulation of cell growth"/>
    <property type="evidence" value="ECO:0000250"/>
    <property type="project" value="UniProtKB"/>
</dbReference>
<dbReference type="GO" id="GO:0045820">
    <property type="term" value="P:negative regulation of glycolytic process"/>
    <property type="evidence" value="ECO:0000250"/>
    <property type="project" value="UniProtKB"/>
</dbReference>
<dbReference type="GO" id="GO:0046580">
    <property type="term" value="P:negative regulation of Ras protein signal transduction"/>
    <property type="evidence" value="ECO:0000250"/>
    <property type="project" value="UniProtKB"/>
</dbReference>
<dbReference type="GO" id="GO:0000122">
    <property type="term" value="P:negative regulation of transcription by RNA polymerase II"/>
    <property type="evidence" value="ECO:0007669"/>
    <property type="project" value="Ensembl"/>
</dbReference>
<dbReference type="GO" id="GO:0006111">
    <property type="term" value="P:regulation of gluconeogenesis"/>
    <property type="evidence" value="ECO:0000250"/>
    <property type="project" value="UniProtKB"/>
</dbReference>
<dbReference type="CDD" id="cd00354">
    <property type="entry name" value="FBPase"/>
    <property type="match status" value="1"/>
</dbReference>
<dbReference type="FunFam" id="3.30.540.10:FF:000037">
    <property type="entry name" value="Fructose-1,6-bisphosphatase 1"/>
    <property type="match status" value="1"/>
</dbReference>
<dbReference type="FunFam" id="3.40.190.80:FF:000001">
    <property type="entry name" value="Fructose-1,6-bisphosphatase class 1"/>
    <property type="match status" value="1"/>
</dbReference>
<dbReference type="Gene3D" id="3.40.190.80">
    <property type="match status" value="1"/>
</dbReference>
<dbReference type="Gene3D" id="3.30.540.10">
    <property type="entry name" value="Fructose-1,6-Bisphosphatase, subunit A, domain 1"/>
    <property type="match status" value="1"/>
</dbReference>
<dbReference type="HAMAP" id="MF_01855">
    <property type="entry name" value="FBPase_class1"/>
    <property type="match status" value="1"/>
</dbReference>
<dbReference type="InterPro" id="IPR044015">
    <property type="entry name" value="FBPase_C_dom"/>
</dbReference>
<dbReference type="InterPro" id="IPR000146">
    <property type="entry name" value="FBPase_class-1"/>
</dbReference>
<dbReference type="InterPro" id="IPR033391">
    <property type="entry name" value="FBPase_N"/>
</dbReference>
<dbReference type="InterPro" id="IPR028343">
    <property type="entry name" value="FBPtase"/>
</dbReference>
<dbReference type="InterPro" id="IPR020548">
    <property type="entry name" value="Fructose_bisphosphatase_AS"/>
</dbReference>
<dbReference type="NCBIfam" id="NF006778">
    <property type="entry name" value="PRK09293.1-1"/>
    <property type="match status" value="1"/>
</dbReference>
<dbReference type="PANTHER" id="PTHR11556:SF11">
    <property type="entry name" value="FRUCTOSE-1,6-BISPHOSPHATASE 1"/>
    <property type="match status" value="1"/>
</dbReference>
<dbReference type="PANTHER" id="PTHR11556">
    <property type="entry name" value="FRUCTOSE-1,6-BISPHOSPHATASE-RELATED"/>
    <property type="match status" value="1"/>
</dbReference>
<dbReference type="Pfam" id="PF00316">
    <property type="entry name" value="FBPase"/>
    <property type="match status" value="1"/>
</dbReference>
<dbReference type="Pfam" id="PF18913">
    <property type="entry name" value="FBPase_C"/>
    <property type="match status" value="1"/>
</dbReference>
<dbReference type="PIRSF" id="PIRSF500210">
    <property type="entry name" value="FBPtase"/>
    <property type="match status" value="1"/>
</dbReference>
<dbReference type="PIRSF" id="PIRSF000904">
    <property type="entry name" value="FBPtase_SBPase"/>
    <property type="match status" value="1"/>
</dbReference>
<dbReference type="PRINTS" id="PR00115">
    <property type="entry name" value="F16BPHPHTASE"/>
</dbReference>
<dbReference type="SUPFAM" id="SSF56655">
    <property type="entry name" value="Carbohydrate phosphatase"/>
    <property type="match status" value="1"/>
</dbReference>
<dbReference type="PROSITE" id="PS00124">
    <property type="entry name" value="FBPASE"/>
    <property type="match status" value="1"/>
</dbReference>
<keyword id="KW-0002">3D-structure</keyword>
<keyword id="KW-0007">Acetylation</keyword>
<keyword id="KW-0021">Allosteric enzyme</keyword>
<keyword id="KW-0119">Carbohydrate metabolism</keyword>
<keyword id="KW-0903">Direct protein sequencing</keyword>
<keyword id="KW-0312">Gluconeogenesis</keyword>
<keyword id="KW-0378">Hydrolase</keyword>
<keyword id="KW-0460">Magnesium</keyword>
<keyword id="KW-0479">Metal-binding</keyword>
<keyword id="KW-0597">Phosphoprotein</keyword>
<keyword id="KW-1185">Reference proteome</keyword>
<accession>P00636</accession>
<reference key="1">
    <citation type="journal article" date="1992" name="Proc. Natl. Acad. Sci. U.S.A.">
        <title>Isolation and sequence analysis of the cDNA for pig kidney fructose 1,6-bisphosphatase.</title>
        <authorList>
            <person name="Williams M.K."/>
            <person name="Kantrowitz E.R."/>
        </authorList>
    </citation>
    <scope>NUCLEOTIDE SEQUENCE [MRNA]</scope>
    <scope>CATALYTIC ACTIVITY</scope>
    <source>
        <tissue>Kidney</tissue>
    </source>
</reference>
<reference key="2">
    <citation type="journal article" date="1982" name="Proc. Natl. Acad. Sci. U.S.A.">
        <title>Complete amino acid sequence of pig kidney fructose-1,6-bisphosphatase.</title>
        <authorList>
            <person name="Marcus F."/>
            <person name="Edelstein I."/>
            <person name="Reardon I."/>
            <person name="Heinrikson R.L."/>
        </authorList>
    </citation>
    <scope>PROTEIN SEQUENCE OF 2-336</scope>
    <scope>ACETYLATION AT THR-2</scope>
    <scope>PHOSPHORYLATION AT SER-208</scope>
    <source>
        <tissue>Kidney cortex</tissue>
    </source>
</reference>
<reference key="3">
    <citation type="journal article" date="1982" name="Arch. Biochem. Biophys.">
        <title>Conservation of primary structure at the proteinase-sensitive site of fructose 1,6-bisphosphatases.</title>
        <authorList>
            <person name="McGregor J.S."/>
            <person name="Hannappel E."/>
            <person name="Xu G.-J."/>
            <person name="Pontremoli S."/>
            <person name="Horecker B.L."/>
        </authorList>
    </citation>
    <scope>PROTEIN SEQUENCE OF 2-24 AND 44-61</scope>
    <scope>ACETYLATION AT THR-2</scope>
    <source>
        <tissue>Kidney</tissue>
    </source>
</reference>
<reference key="4">
    <citation type="journal article" date="1982" name="Adv. Enzymol. Relat. Areas Mol. Biol.">
        <title>Mechanism of action of fructose 1,6-bisphosphatase.</title>
        <authorList>
            <person name="Benkovic S.J."/>
            <person name="Demaine M.M."/>
        </authorList>
    </citation>
    <scope>SUBSTRATE-BINDING SITE</scope>
    <scope>LIGANDS</scope>
    <scope>REVIEW</scope>
</reference>
<reference evidence="61 64" key="5">
    <citation type="journal article" date="1990" name="J. Mol. Biol.">
        <title>Structure refinement of fructose-1,6-bisphosphatase and its fructose 2,6-bisphosphate complex at 2.8-A resolution.</title>
        <authorList>
            <person name="Ke H.M."/>
            <person name="Thorpe C.M."/>
            <person name="Seaton B.A."/>
            <person name="Lipscomb W.N."/>
            <person name="Marcus F."/>
        </authorList>
    </citation>
    <scope>X-RAY CRYSTALLOGRAPHY (2.6 ANGSTROMS) IN COMPLEX WITH FRUCTOSE-2,6-BISPHOSPHATE</scope>
    <scope>SEQUENCE REVISION</scope>
</reference>
<reference evidence="25" key="6">
    <citation type="journal article" date="1990" name="Proc. Natl. Acad. Sci. U.S.A.">
        <title>Crystal structure of fructose-1,6-bisphosphatase complexed with fructose 6-phosphate, AMP, and magnesium.</title>
        <authorList>
            <person name="Ke H.M."/>
            <person name="Zhang Y.P."/>
            <person name="Lipscomb W.N."/>
        </authorList>
    </citation>
    <scope>X-RAY CRYSTALLOGRAPHY (2.5 ANGSTROMS) IN COMPLEX WITH FRUCTOSE-6-PHOSPHATE; AMP AND MAGNESIUM</scope>
    <scope>ACTIVITY REGULATION</scope>
    <scope>SUBUNIT</scope>
</reference>
<reference evidence="80" key="7">
    <citation type="journal article" date="1991" name="Proc. Natl. Acad. Sci. U.S.A.">
        <title>Crystal structure of the neutral form of fructose-1,6-bisphosphatase complexed with the product fructose 6-phosphate at 2.1-A resolution.</title>
        <authorList>
            <person name="Ke H.M."/>
            <person name="Zhang Y.P."/>
            <person name="Liang J.-Y."/>
            <person name="Lipscomb W.N."/>
        </authorList>
    </citation>
    <scope>X-RAY CRYSTALLOGRAPHY (2.1 ANGSTROMS) IN COMPLEX WITH FRUCTOSE-6-PHOSPHATE</scope>
</reference>
<reference evidence="28" key="8">
    <citation type="journal article" date="1992" name="Proc. Natl. Acad. Sci. U.S.A.">
        <title>Crystal structure of the neutral form of fructose 1,6-bisphosphatase complexed with regulatory inhibitor fructose 2,6-bisphosphate at 2.6-A resolution.</title>
        <authorList>
            <person name="Liang J.-Y."/>
            <person name="Huang S."/>
            <person name="Zhang Y.P."/>
            <person name="Ke H.M."/>
            <person name="Lipscomb W.N."/>
        </authorList>
    </citation>
    <scope>X-RAY CRYSTALLOGRAPHY (2.6 ANGSTROMS) IN COMPLEX WITH FRUCTOSE-2,6-BISPHOSPHATE</scope>
</reference>
<reference evidence="17" key="9">
    <citation type="journal article" date="1998" name="Biochemistry">
        <title>Role of a dynamic loop in cation activation and allosteric regulation of recombinant porcine fructose-1,6-bisphosphatase.</title>
        <authorList>
            <person name="Choe J.-Y."/>
            <person name="Poland B.W."/>
            <person name="Fromm H.J."/>
            <person name="Honzatko R.B."/>
        </authorList>
    </citation>
    <scope>X-RAY CRYSTALLOGRAPHY (2.27 ANGSTROMS) IN COMPLEX WITH ZINC IONS</scope>
    <scope>COFACTOR</scope>
    <scope>ACTIVITY REGULATION</scope>
</reference>
<reference evidence="18 19 20" key="10">
    <citation type="journal article" date="2000" name="Biochemistry">
        <title>Crystal structures of fructose 1,6-bisphosphatase: mechanism of catalysis and allosteric inhibition revealed in product complexes.</title>
        <authorList>
            <person name="Choe J.-Y."/>
            <person name="Fromm H.J."/>
            <person name="Honzatko R.B."/>
        </authorList>
    </citation>
    <scope>X-RAY CRYSTALLOGRAPHY (2.23 ANGSTROMS) IN COMPLEXES WITH FRUCTOSE-6-PHOSPHATE; PHOSPHATE; AMP; MAGNESIUM AND ZINC IONS</scope>
    <scope>SUBUNIT</scope>
    <scope>ACTIVITY REGULATION</scope>
</reference>
<reference evidence="40 41 42" key="11">
    <citation type="journal article" date="2003" name="J. Biol. Chem.">
        <title>Metaphosphate in the active site of fructose-1,6-bisphosphatase.</title>
        <authorList>
            <person name="Choe J.-Y."/>
            <person name="Iancu C.V."/>
            <person name="Fromm H.J."/>
            <person name="Honzatko R.B."/>
        </authorList>
    </citation>
    <scope>X-RAY CRYSTALLOGRAPHY (1.3 ANGSTROMS) IN COMPLEXES WITH MAGNESIUM IONS; FRUCTOSE-6-PHOSPHATE AND PHOSPHATE</scope>
    <scope>COFACTOR</scope>
    <scope>ENZYME MECHANISM</scope>
</reference>
<reference evidence="52" key="12">
    <citation type="journal article" date="2003" name="J. Biol. Chem.">
        <title>Inhibition of fructose-1,6-bisphosphatase by a new class of allosteric effectors.</title>
        <authorList>
            <person name="Choe J.-Y."/>
            <person name="Nelson S.W."/>
            <person name="Arienti K.L."/>
            <person name="Axe F.U."/>
            <person name="Collins T.L."/>
            <person name="Jones T.K."/>
            <person name="Kimmich R.D.A."/>
            <person name="Newman M.J."/>
            <person name="Norvell K."/>
            <person name="Ripka W.C."/>
            <person name="Romano S.J."/>
            <person name="Short K.M."/>
            <person name="Slee D.H."/>
            <person name="Fromm H.J."/>
            <person name="Honzatko R.B."/>
        </authorList>
    </citation>
    <scope>X-RAY CRYSTALLOGRAPHY (2.35 ANGSTROMS) IN COMPLEX WITH THE SYNTHETIC INHIBITOR OC252; FRUCTOSE-6-PHOSPHATE; PHOSPHATE AND DIVALENT METAL CATIONS</scope>
    <scope>COFACTOR</scope>
    <scope>SUBUNIT</scope>
    <scope>ACTIVITY REGULATION</scope>
</reference>
<reference evidence="56 57 58" key="13">
    <citation type="journal article" date="2005" name="J. Biol. Chem.">
        <title>R-state AMP complex reveals initial steps of the quaternary transition of fructose-1,6-bisphosphatase.</title>
        <authorList>
            <person name="Iancu C.V."/>
            <person name="Mukund S."/>
            <person name="Fromm H.J."/>
            <person name="Honzatko R.B."/>
        </authorList>
    </citation>
    <scope>X-RAY CRYSTALLOGRAPHY (1.85 ANGSTROMS) OF MUTANT LEU-55 IN COMPLEXES WITH AMP; FRUCTORSE-6-PHOSPHAT; PHOSPHATE AND MAGNESIUM IONS</scope>
    <scope>SUBUNIT</scope>
    <scope>COFACTOR</scope>
    <scope>CATALYTIC ACTIVITY</scope>
    <scope>BIOPHYSICOCHEMICAL PROPERTIES</scope>
    <scope>ACTIVITY REGULATION</scope>
</reference>
<reference evidence="62 63" key="14">
    <citation type="journal article" date="2007" name="J. Biol. Chem.">
        <title>Structures of mammalian and bacterial fructose-1,6-bisphosphatase reveal the basis for synergism in AMP/fructose 2,6-bisphosphate inhibition.</title>
        <authorList>
            <person name="Hines J.K."/>
            <person name="Chen X."/>
            <person name="Nix J.C."/>
            <person name="Fromm H.J."/>
            <person name="Honzatko R.B."/>
        </authorList>
    </citation>
    <scope>X-RAY CRYSTALLOGRAPHY (1.5 ANGSTROMS) IN COMPLEXES WITH MAGNESIUM IONS AND FRUCTOSE-2,6-DIPHOSPHATE</scope>
    <scope>SUBUNIT</scope>
    <scope>ACTIVITY REGULATION</scope>
</reference>
<protein>
    <recommendedName>
        <fullName>Fructose-1,6-bisphosphatase 1</fullName>
        <shortName>FBPase 1</shortName>
        <ecNumber evidence="7 16">3.1.3.11</ecNumber>
    </recommendedName>
    <alternativeName>
        <fullName>D-fructose-1,6-bisphosphate 1-phosphohydrolase 1</fullName>
    </alternativeName>
    <alternativeName>
        <fullName>Liver FBPase</fullName>
    </alternativeName>
</protein>
<gene>
    <name type="primary">FBP1</name>
    <name type="synonym">FBP</name>
</gene>
<organism>
    <name type="scientific">Sus scrofa</name>
    <name type="common">Pig</name>
    <dbReference type="NCBI Taxonomy" id="9823"/>
    <lineage>
        <taxon>Eukaryota</taxon>
        <taxon>Metazoa</taxon>
        <taxon>Chordata</taxon>
        <taxon>Craniata</taxon>
        <taxon>Vertebrata</taxon>
        <taxon>Euteleostomi</taxon>
        <taxon>Mammalia</taxon>
        <taxon>Eutheria</taxon>
        <taxon>Laurasiatheria</taxon>
        <taxon>Artiodactyla</taxon>
        <taxon>Suina</taxon>
        <taxon>Suidae</taxon>
        <taxon>Sus</taxon>
    </lineage>
</organism>
<proteinExistence type="evidence at protein level"/>